<keyword id="KW-0050">Antiport</keyword>
<keyword id="KW-0997">Cell inner membrane</keyword>
<keyword id="KW-1003">Cell membrane</keyword>
<keyword id="KW-0868">Chloride</keyword>
<keyword id="KW-0406">Ion transport</keyword>
<keyword id="KW-0472">Membrane</keyword>
<keyword id="KW-0812">Transmembrane</keyword>
<keyword id="KW-1133">Transmembrane helix</keyword>
<keyword id="KW-0813">Transport</keyword>
<name>CLCA_SALPA</name>
<protein>
    <recommendedName>
        <fullName evidence="1">H(+)/Cl(-) exchange transporter ClcA</fullName>
    </recommendedName>
</protein>
<gene>
    <name evidence="1" type="primary">clcA</name>
    <name evidence="1" type="synonym">eriC</name>
    <name type="ordered locus">SPA0209</name>
</gene>
<reference key="1">
    <citation type="journal article" date="2004" name="Nat. Genet.">
        <title>Comparison of genome degradation in Paratyphi A and Typhi, human-restricted serovars of Salmonella enterica that cause typhoid.</title>
        <authorList>
            <person name="McClelland M."/>
            <person name="Sanderson K.E."/>
            <person name="Clifton S.W."/>
            <person name="Latreille P."/>
            <person name="Porwollik S."/>
            <person name="Sabo A."/>
            <person name="Meyer R."/>
            <person name="Bieri T."/>
            <person name="Ozersky P."/>
            <person name="McLellan M."/>
            <person name="Harkins C.R."/>
            <person name="Wang C."/>
            <person name="Nguyen C."/>
            <person name="Berghoff A."/>
            <person name="Elliott G."/>
            <person name="Kohlberg S."/>
            <person name="Strong C."/>
            <person name="Du F."/>
            <person name="Carter J."/>
            <person name="Kremizki C."/>
            <person name="Layman D."/>
            <person name="Leonard S."/>
            <person name="Sun H."/>
            <person name="Fulton L."/>
            <person name="Nash W."/>
            <person name="Miner T."/>
            <person name="Minx P."/>
            <person name="Delehaunty K."/>
            <person name="Fronick C."/>
            <person name="Magrini V."/>
            <person name="Nhan M."/>
            <person name="Warren W."/>
            <person name="Florea L."/>
            <person name="Spieth J."/>
            <person name="Wilson R.K."/>
        </authorList>
    </citation>
    <scope>NUCLEOTIDE SEQUENCE [LARGE SCALE GENOMIC DNA]</scope>
    <source>
        <strain>ATCC 9150 / SARB42</strain>
    </source>
</reference>
<organism>
    <name type="scientific">Salmonella paratyphi A (strain ATCC 9150 / SARB42)</name>
    <dbReference type="NCBI Taxonomy" id="295319"/>
    <lineage>
        <taxon>Bacteria</taxon>
        <taxon>Pseudomonadati</taxon>
        <taxon>Pseudomonadota</taxon>
        <taxon>Gammaproteobacteria</taxon>
        <taxon>Enterobacterales</taxon>
        <taxon>Enterobacteriaceae</taxon>
        <taxon>Salmonella</taxon>
    </lineage>
</organism>
<sequence>MKTDTSTFLAQQIVRLRRRDQIRRLMQRDKTPLAILFMAAVVGTLTGLVGVAFEKTVSWVQNMRIGALVQVADHAFLLWPLAFILSALLAMVGYFLVRKFAPEAGGSGIPEIEGALEELRPVRWWRVLPVKFIGGMGTLGAGMVLGREGPTVQIGGNLGRMVLDVFRMRSAEARHTLLATGAAAGLSAAFNAPLAGILFIIEEMRPQFRYNLISIKAVFTGVIMSSIVFRIFNGEAPIIEVGKLSDAPVNTLWLYLILGIIFGCVGPVFNSLVLRTQDMFQRFHGGEIKKWVLMGGAIGGLCGILGLIEPAAAGGGFNLIPIAAAGNFSVGLLLFIFITRVVTTLLCFSSGAPGGIFAPMLALGTLLGTAFGMAAAVLFPQYHPEAGTFAIAGMGALMAASVRAPLTGIVLVLEMTDNYQLILPMIITCLGATLLAQFLGGKPLYSTILARTLAKQDAEQAAKNQNAPAGENT</sequence>
<accession>Q5PD50</accession>
<proteinExistence type="inferred from homology"/>
<dbReference type="EMBL" id="CP000026">
    <property type="protein sequence ID" value="AAV76239.1"/>
    <property type="molecule type" value="Genomic_DNA"/>
</dbReference>
<dbReference type="RefSeq" id="WP_000845434.1">
    <property type="nucleotide sequence ID" value="NC_006511.1"/>
</dbReference>
<dbReference type="SMR" id="Q5PD50"/>
<dbReference type="KEGG" id="spt:SPA0209"/>
<dbReference type="HOGENOM" id="CLU_015263_7_0_6"/>
<dbReference type="Proteomes" id="UP000008185">
    <property type="component" value="Chromosome"/>
</dbReference>
<dbReference type="GO" id="GO:0005886">
    <property type="term" value="C:plasma membrane"/>
    <property type="evidence" value="ECO:0007669"/>
    <property type="project" value="UniProtKB-SubCell"/>
</dbReference>
<dbReference type="GO" id="GO:0015297">
    <property type="term" value="F:antiporter activity"/>
    <property type="evidence" value="ECO:0007669"/>
    <property type="project" value="UniProtKB-UniRule"/>
</dbReference>
<dbReference type="GO" id="GO:0005247">
    <property type="term" value="F:voltage-gated chloride channel activity"/>
    <property type="evidence" value="ECO:0007669"/>
    <property type="project" value="TreeGrafter"/>
</dbReference>
<dbReference type="CDD" id="cd01031">
    <property type="entry name" value="EriC"/>
    <property type="match status" value="1"/>
</dbReference>
<dbReference type="FunFam" id="1.10.3080.10:FF:000005">
    <property type="entry name" value="H(+)/Cl(-) exchange transporter ClcA"/>
    <property type="match status" value="1"/>
</dbReference>
<dbReference type="Gene3D" id="1.10.3080.10">
    <property type="entry name" value="Clc chloride channel"/>
    <property type="match status" value="1"/>
</dbReference>
<dbReference type="HAMAP" id="MF_01128">
    <property type="entry name" value="CLC_ClcA"/>
    <property type="match status" value="1"/>
</dbReference>
<dbReference type="InterPro" id="IPR023861">
    <property type="entry name" value="Cl-channel_ClcA"/>
</dbReference>
<dbReference type="InterPro" id="IPR014743">
    <property type="entry name" value="Cl-channel_core"/>
</dbReference>
<dbReference type="InterPro" id="IPR001807">
    <property type="entry name" value="ClC"/>
</dbReference>
<dbReference type="NCBIfam" id="NF003640">
    <property type="entry name" value="PRK05277.1"/>
    <property type="match status" value="1"/>
</dbReference>
<dbReference type="PANTHER" id="PTHR45711">
    <property type="entry name" value="CHLORIDE CHANNEL PROTEIN"/>
    <property type="match status" value="1"/>
</dbReference>
<dbReference type="PANTHER" id="PTHR45711:SF6">
    <property type="entry name" value="CHLORIDE CHANNEL PROTEIN"/>
    <property type="match status" value="1"/>
</dbReference>
<dbReference type="Pfam" id="PF00654">
    <property type="entry name" value="Voltage_CLC"/>
    <property type="match status" value="1"/>
</dbReference>
<dbReference type="PRINTS" id="PR00762">
    <property type="entry name" value="CLCHANNEL"/>
</dbReference>
<dbReference type="SUPFAM" id="SSF81340">
    <property type="entry name" value="Clc chloride channel"/>
    <property type="match status" value="1"/>
</dbReference>
<feature type="chain" id="PRO_0000094476" description="H(+)/Cl(-) exchange transporter ClcA">
    <location>
        <begin position="1"/>
        <end position="473"/>
    </location>
</feature>
<feature type="topological domain" description="Cytoplasmic" evidence="1">
    <location>
        <begin position="1"/>
        <end position="32"/>
    </location>
</feature>
<feature type="transmembrane region" description="Helical" evidence="1">
    <location>
        <begin position="33"/>
        <end position="69"/>
    </location>
</feature>
<feature type="topological domain" description="Periplasmic" evidence="1">
    <location>
        <begin position="70"/>
        <end position="76"/>
    </location>
</feature>
<feature type="transmembrane region" description="Helical" evidence="1">
    <location>
        <begin position="77"/>
        <end position="100"/>
    </location>
</feature>
<feature type="intramembrane region" description="Helical" evidence="1">
    <location>
        <begin position="109"/>
        <end position="116"/>
    </location>
</feature>
<feature type="topological domain" description="Cytoplasmic" evidence="1">
    <location>
        <begin position="117"/>
        <end position="123"/>
    </location>
</feature>
<feature type="transmembrane region" description="Helical" evidence="1">
    <location>
        <begin position="124"/>
        <end position="141"/>
    </location>
</feature>
<feature type="transmembrane region" description="Helical" evidence="1">
    <location>
        <begin position="148"/>
        <end position="166"/>
    </location>
</feature>
<feature type="topological domain" description="Cytoplasmic" evidence="1">
    <location>
        <begin position="167"/>
        <end position="176"/>
    </location>
</feature>
<feature type="intramembrane region" description="Helical" evidence="1">
    <location>
        <begin position="177"/>
        <end position="189"/>
    </location>
</feature>
<feature type="intramembrane region" description="Helical" evidence="1">
    <location>
        <begin position="193"/>
        <end position="201"/>
    </location>
</feature>
<feature type="topological domain" description="Cytoplasmic" evidence="1">
    <location>
        <begin position="202"/>
        <end position="214"/>
    </location>
</feature>
<feature type="transmembrane region" description="Helical" evidence="1">
    <location>
        <begin position="215"/>
        <end position="232"/>
    </location>
</feature>
<feature type="topological domain" description="Periplasmic" evidence="1">
    <location>
        <begin position="233"/>
        <end position="252"/>
    </location>
</feature>
<feature type="transmembrane region" description="Helical" evidence="1">
    <location>
        <begin position="253"/>
        <end position="281"/>
    </location>
</feature>
<feature type="topological domain" description="Cytoplasmic" evidence="1">
    <location>
        <begin position="282"/>
        <end position="287"/>
    </location>
</feature>
<feature type="transmembrane region" description="Helical" evidence="1">
    <location>
        <begin position="288"/>
        <end position="309"/>
    </location>
</feature>
<feature type="topological domain" description="Periplasmic" evidence="1">
    <location>
        <begin position="310"/>
        <end position="329"/>
    </location>
</feature>
<feature type="transmembrane region" description="Helical" evidence="1">
    <location>
        <begin position="330"/>
        <end position="349"/>
    </location>
</feature>
<feature type="transmembrane region" description="Helical" evidence="1">
    <location>
        <begin position="355"/>
        <end position="376"/>
    </location>
</feature>
<feature type="topological domain" description="Periplasmic" evidence="1">
    <location>
        <begin position="377"/>
        <end position="386"/>
    </location>
</feature>
<feature type="intramembrane region" description="Helical" evidence="1">
    <location>
        <begin position="387"/>
        <end position="401"/>
    </location>
</feature>
<feature type="intramembrane region" description="Note=Loop between two helices" evidence="1">
    <location>
        <begin position="402"/>
        <end position="404"/>
    </location>
</feature>
<feature type="intramembrane region" description="Helical" evidence="1">
    <location>
        <begin position="405"/>
        <end position="416"/>
    </location>
</feature>
<feature type="intramembrane region" description="Note=Loop between two helices" evidence="1">
    <location>
        <begin position="417"/>
        <end position="421"/>
    </location>
</feature>
<feature type="transmembrane region" description="Helical" evidence="1">
    <location>
        <begin position="422"/>
        <end position="438"/>
    </location>
</feature>
<feature type="topological domain" description="Cytoplasmic" evidence="1">
    <location>
        <begin position="439"/>
        <end position="473"/>
    </location>
</feature>
<feature type="short sequence motif" description="Selectivity filter part_1" evidence="1">
    <location>
        <begin position="106"/>
        <end position="110"/>
    </location>
</feature>
<feature type="short sequence motif" description="Selectivity filter part_2" evidence="1">
    <location>
        <begin position="146"/>
        <end position="150"/>
    </location>
</feature>
<feature type="short sequence motif" description="Selectivity filter part_3" evidence="1">
    <location>
        <begin position="355"/>
        <end position="359"/>
    </location>
</feature>
<feature type="binding site" evidence="1">
    <location>
        <position position="107"/>
    </location>
    <ligand>
        <name>chloride</name>
        <dbReference type="ChEBI" id="CHEBI:17996"/>
    </ligand>
</feature>
<feature type="binding site" evidence="1">
    <location>
        <position position="356"/>
    </location>
    <ligand>
        <name>chloride</name>
        <dbReference type="ChEBI" id="CHEBI:17996"/>
    </ligand>
</feature>
<feature type="binding site" evidence="1">
    <location>
        <position position="357"/>
    </location>
    <ligand>
        <name>chloride</name>
        <dbReference type="ChEBI" id="CHEBI:17996"/>
    </ligand>
</feature>
<feature type="binding site" evidence="1">
    <location>
        <position position="445"/>
    </location>
    <ligand>
        <name>chloride</name>
        <dbReference type="ChEBI" id="CHEBI:17996"/>
    </ligand>
</feature>
<feature type="site" description="Mediates proton transfer from the outer aqueous phase to the interior of the protein; involved in linking H(+) and Cl(-) transport" evidence="1">
    <location>
        <position position="148"/>
    </location>
</feature>
<feature type="site" description="Mediates proton transfer from the protein to the inner aqueous phase" evidence="1">
    <location>
        <position position="203"/>
    </location>
</feature>
<comment type="function">
    <text evidence="1">Proton-coupled chloride transporter. Functions as antiport system and exchanges two chloride ions for 1 proton. Probably acts as an electrical shunt for an outwardly-directed proton pump that is linked to amino acid decarboxylation, as part of the extreme acid resistance (XAR) response.</text>
</comment>
<comment type="catalytic activity">
    <reaction evidence="1">
        <text>2 chloride(in) + H(+)(out) = 2 chloride(out) + H(+)(in)</text>
        <dbReference type="Rhea" id="RHEA:29567"/>
        <dbReference type="ChEBI" id="CHEBI:15378"/>
        <dbReference type="ChEBI" id="CHEBI:17996"/>
    </reaction>
</comment>
<comment type="subunit">
    <text evidence="1">Homodimer.</text>
</comment>
<comment type="subcellular location">
    <subcellularLocation>
        <location evidence="1">Cell inner membrane</location>
        <topology evidence="1">Multi-pass membrane protein</topology>
    </subcellularLocation>
</comment>
<comment type="similarity">
    <text evidence="1">Belongs to the chloride channel (TC 2.A.49) family. ClcA subfamily.</text>
</comment>
<evidence type="ECO:0000255" key="1">
    <source>
        <dbReference type="HAMAP-Rule" id="MF_01128"/>
    </source>
</evidence>